<protein>
    <recommendedName>
        <fullName>U12-lycotoxin-Ls1e</fullName>
    </recommendedName>
    <alternativeName>
        <fullName>Toxin-like structure LSTX-K6</fullName>
    </alternativeName>
</protein>
<accession>B6DD18</accession>
<name>TXC06_LYCSI</name>
<evidence type="ECO:0000250" key="1"/>
<evidence type="ECO:0000255" key="2"/>
<evidence type="ECO:0000305" key="3"/>
<keyword id="KW-1015">Disulfide bond</keyword>
<keyword id="KW-0964">Secreted</keyword>
<keyword id="KW-0732">Signal</keyword>
<keyword id="KW-0800">Toxin</keyword>
<dbReference type="EMBL" id="EU926102">
    <property type="protein sequence ID" value="ACI41434.1"/>
    <property type="molecule type" value="mRNA"/>
</dbReference>
<dbReference type="EMBL" id="FM864106">
    <property type="protein sequence ID" value="CAS03703.1"/>
    <property type="molecule type" value="mRNA"/>
</dbReference>
<dbReference type="SMR" id="B6DD18"/>
<dbReference type="ArachnoServer" id="AS001041">
    <property type="toxin name" value="U12-lycotoxin-Ls1e"/>
</dbReference>
<dbReference type="GO" id="GO:0005576">
    <property type="term" value="C:extracellular region"/>
    <property type="evidence" value="ECO:0007669"/>
    <property type="project" value="UniProtKB-SubCell"/>
</dbReference>
<dbReference type="GO" id="GO:0090729">
    <property type="term" value="F:toxin activity"/>
    <property type="evidence" value="ECO:0007669"/>
    <property type="project" value="UniProtKB-KW"/>
</dbReference>
<feature type="signal peptide" evidence="2">
    <location>
        <begin position="1"/>
        <end position="18"/>
    </location>
</feature>
<feature type="propeptide" id="PRO_0000401855" evidence="1">
    <location>
        <begin position="19"/>
        <end position="38"/>
    </location>
</feature>
<feature type="chain" id="PRO_0000401856" description="U12-lycotoxin-Ls1e">
    <location>
        <begin position="39"/>
        <end position="93"/>
    </location>
</feature>
<reference key="1">
    <citation type="journal article" date="2010" name="Zoology">
        <title>Transcriptome analysis of the venom glands of the Chinese wolf spider Lycosa singoriensis.</title>
        <authorList>
            <person name="Zhang Y."/>
            <person name="Chen J."/>
            <person name="Tang X."/>
            <person name="Wang F."/>
            <person name="Jiang L."/>
            <person name="Xiong X."/>
            <person name="Wang M."/>
            <person name="Rong M."/>
            <person name="Liu Z."/>
            <person name="Liang S."/>
        </authorList>
    </citation>
    <scope>NUCLEOTIDE SEQUENCE [LARGE SCALE MRNA]</scope>
    <source>
        <tissue>Venom gland</tissue>
    </source>
</reference>
<proteinExistence type="evidence at transcript level"/>
<comment type="subcellular location">
    <subcellularLocation>
        <location evidence="1">Secreted</location>
    </subcellularLocation>
</comment>
<comment type="tissue specificity">
    <text>Expressed by the venom gland.</text>
</comment>
<comment type="PTM">
    <text evidence="3">Contains 5 disulfide bonds.</text>
</comment>
<comment type="similarity">
    <text evidence="3">Belongs to the neurotoxin 31 family.</text>
</comment>
<sequence>MKFAVILLFTLVVLAVASESVEEDTREIDVEEFQEQQRGCADLRQPCTKGDDCSCCGSDGVCNCEHLHKTGCFCKTAGPYEKLKKWFKRCPKY</sequence>
<organism>
    <name type="scientific">Lycosa singoriensis</name>
    <name type="common">Wolf spider</name>
    <name type="synonym">Aranea singoriensis</name>
    <dbReference type="NCBI Taxonomy" id="434756"/>
    <lineage>
        <taxon>Eukaryota</taxon>
        <taxon>Metazoa</taxon>
        <taxon>Ecdysozoa</taxon>
        <taxon>Arthropoda</taxon>
        <taxon>Chelicerata</taxon>
        <taxon>Arachnida</taxon>
        <taxon>Araneae</taxon>
        <taxon>Araneomorphae</taxon>
        <taxon>Entelegynae</taxon>
        <taxon>Lycosoidea</taxon>
        <taxon>Lycosidae</taxon>
        <taxon>Lycosa</taxon>
    </lineage>
</organism>